<accession>Q31P89</accession>
<evidence type="ECO:0000255" key="1">
    <source>
        <dbReference type="HAMAP-Rule" id="MF_00377"/>
    </source>
</evidence>
<evidence type="ECO:0000269" key="2">
    <source>
    </source>
</evidence>
<evidence type="ECO:0000312" key="3">
    <source>
        <dbReference type="EMBL" id="ABB57130.1"/>
    </source>
</evidence>
<proteinExistence type="evidence at protein level"/>
<name>DNAA_SYNE7</name>
<gene>
    <name evidence="1" type="primary">dnaA</name>
    <name evidence="3" type="ordered locus">Synpcc7942_1100</name>
</gene>
<comment type="function">
    <text evidence="1">Plays an essential role in the initiation and regulation of chromosomal replication. ATP-DnaA binds to the origin of replication (oriC) to initiate formation of the DNA replication initiation complex once per cell cycle. Binds the DnaA box (a 9 base pair repeat at the origin) and separates the double-stranded (ds)DNA. Forms a right-handed helical filament on oriC DNA; dsDNA binds to the exterior of the filament while single-stranded (ss)DNA is stabiized in the filament's interior. The ATP-DnaA-oriC complex binds and stabilizes one strand of the AT-rich DNA unwinding element (DUE), permitting loading of DNA polymerase. After initiation quickly degrades to an ADP-DnaA complex that is not apt for DNA replication. Binds acidic phospholipids.</text>
</comment>
<comment type="function">
    <text evidence="2">Strand separation requires the DnaA boxes and adjacent DnaA-trio motifs, but works equally well with ADP or ATP.</text>
</comment>
<comment type="subunit">
    <text evidence="1">Oligomerizes as a right-handed, spiral filament on DNA at oriC.</text>
</comment>
<comment type="subcellular location">
    <subcellularLocation>
        <location evidence="1">Cytoplasm</location>
    </subcellularLocation>
</comment>
<comment type="domain">
    <text evidence="1">Domain I is involved in oligomerization and binding regulators, domain II is flexibile and of varying length in different bacteria, domain III forms the AAA+ region, while domain IV binds dsDNA.</text>
</comment>
<comment type="similarity">
    <text evidence="1">Belongs to the DnaA family.</text>
</comment>
<reference evidence="3" key="1">
    <citation type="submission" date="2005-08" db="EMBL/GenBank/DDBJ databases">
        <title>Complete sequence of chromosome 1 of Synechococcus elongatus PCC 7942.</title>
        <authorList>
            <consortium name="US DOE Joint Genome Institute"/>
            <person name="Copeland A."/>
            <person name="Lucas S."/>
            <person name="Lapidus A."/>
            <person name="Barry K."/>
            <person name="Detter J.C."/>
            <person name="Glavina T."/>
            <person name="Hammon N."/>
            <person name="Israni S."/>
            <person name="Pitluck S."/>
            <person name="Schmutz J."/>
            <person name="Larimer F."/>
            <person name="Land M."/>
            <person name="Kyrpides N."/>
            <person name="Lykidis A."/>
            <person name="Golden S."/>
            <person name="Richardson P."/>
        </authorList>
    </citation>
    <scope>NUCLEOTIDE SEQUENCE [LARGE SCALE GENOMIC DNA]</scope>
    <source>
        <strain>ATCC 33912 / PCC 7942 / FACHB-805</strain>
    </source>
</reference>
<reference key="2">
    <citation type="journal article" date="2021" name="Nucleic Acids Res.">
        <title>Evidence for a chromosome origin unwinding system broadly conserved in bacteria.</title>
        <authorList>
            <person name="Pelliciari S."/>
            <person name="Dong M.J."/>
            <person name="Gao F."/>
            <person name="Murray H."/>
        </authorList>
    </citation>
    <scope>FUNCTION</scope>
    <scope>ATP-BINDING</scope>
    <scope>MUTAGENESIS OF ILE-224 AND ARG-298</scope>
</reference>
<protein>
    <recommendedName>
        <fullName evidence="1">Chromosomal replication initiator protein DnaA</fullName>
    </recommendedName>
</protein>
<dbReference type="EMBL" id="CP000100">
    <property type="protein sequence ID" value="ABB57130.1"/>
    <property type="molecule type" value="Genomic_DNA"/>
</dbReference>
<dbReference type="RefSeq" id="WP_011377863.1">
    <property type="nucleotide sequence ID" value="NZ_JACJTX010000003.1"/>
</dbReference>
<dbReference type="STRING" id="1140.Synpcc7942_1100"/>
<dbReference type="PaxDb" id="1140-Synpcc7942_1100"/>
<dbReference type="GeneID" id="72429953"/>
<dbReference type="KEGG" id="syf:Synpcc7942_1100"/>
<dbReference type="eggNOG" id="COG0593">
    <property type="taxonomic scope" value="Bacteria"/>
</dbReference>
<dbReference type="HOGENOM" id="CLU_026910_3_1_3"/>
<dbReference type="OrthoDB" id="9807019at2"/>
<dbReference type="BioCyc" id="SYNEL:SYNPCC7942_1100-MONOMER"/>
<dbReference type="Proteomes" id="UP000889800">
    <property type="component" value="Chromosome"/>
</dbReference>
<dbReference type="GO" id="GO:0005737">
    <property type="term" value="C:cytoplasm"/>
    <property type="evidence" value="ECO:0007669"/>
    <property type="project" value="UniProtKB-SubCell"/>
</dbReference>
<dbReference type="GO" id="GO:0005886">
    <property type="term" value="C:plasma membrane"/>
    <property type="evidence" value="ECO:0007669"/>
    <property type="project" value="TreeGrafter"/>
</dbReference>
<dbReference type="GO" id="GO:0005524">
    <property type="term" value="F:ATP binding"/>
    <property type="evidence" value="ECO:0007669"/>
    <property type="project" value="UniProtKB-UniRule"/>
</dbReference>
<dbReference type="GO" id="GO:0016887">
    <property type="term" value="F:ATP hydrolysis activity"/>
    <property type="evidence" value="ECO:0007669"/>
    <property type="project" value="InterPro"/>
</dbReference>
<dbReference type="GO" id="GO:0003688">
    <property type="term" value="F:DNA replication origin binding"/>
    <property type="evidence" value="ECO:0007669"/>
    <property type="project" value="UniProtKB-UniRule"/>
</dbReference>
<dbReference type="GO" id="GO:0008289">
    <property type="term" value="F:lipid binding"/>
    <property type="evidence" value="ECO:0007669"/>
    <property type="project" value="UniProtKB-KW"/>
</dbReference>
<dbReference type="GO" id="GO:0006270">
    <property type="term" value="P:DNA replication initiation"/>
    <property type="evidence" value="ECO:0007669"/>
    <property type="project" value="UniProtKB-UniRule"/>
</dbReference>
<dbReference type="GO" id="GO:0006275">
    <property type="term" value="P:regulation of DNA replication"/>
    <property type="evidence" value="ECO:0007669"/>
    <property type="project" value="UniProtKB-UniRule"/>
</dbReference>
<dbReference type="CDD" id="cd00009">
    <property type="entry name" value="AAA"/>
    <property type="match status" value="1"/>
</dbReference>
<dbReference type="CDD" id="cd06571">
    <property type="entry name" value="Bac_DnaA_C"/>
    <property type="match status" value="1"/>
</dbReference>
<dbReference type="FunFam" id="3.40.50.300:FF:000668">
    <property type="entry name" value="Chromosomal replication initiator protein DnaA"/>
    <property type="match status" value="1"/>
</dbReference>
<dbReference type="Gene3D" id="1.10.1750.10">
    <property type="match status" value="1"/>
</dbReference>
<dbReference type="Gene3D" id="1.10.8.60">
    <property type="match status" value="1"/>
</dbReference>
<dbReference type="Gene3D" id="3.30.300.180">
    <property type="match status" value="1"/>
</dbReference>
<dbReference type="Gene3D" id="3.40.50.300">
    <property type="entry name" value="P-loop containing nucleotide triphosphate hydrolases"/>
    <property type="match status" value="1"/>
</dbReference>
<dbReference type="HAMAP" id="MF_00377">
    <property type="entry name" value="DnaA_bact"/>
    <property type="match status" value="1"/>
</dbReference>
<dbReference type="InterPro" id="IPR003593">
    <property type="entry name" value="AAA+_ATPase"/>
</dbReference>
<dbReference type="InterPro" id="IPR001957">
    <property type="entry name" value="Chromosome_initiator_DnaA"/>
</dbReference>
<dbReference type="InterPro" id="IPR020591">
    <property type="entry name" value="Chromosome_initiator_DnaA-like"/>
</dbReference>
<dbReference type="InterPro" id="IPR018312">
    <property type="entry name" value="Chromosome_initiator_DnaA_CS"/>
</dbReference>
<dbReference type="InterPro" id="IPR013159">
    <property type="entry name" value="DnaA_C"/>
</dbReference>
<dbReference type="InterPro" id="IPR013317">
    <property type="entry name" value="DnaA_dom"/>
</dbReference>
<dbReference type="InterPro" id="IPR024633">
    <property type="entry name" value="DnaA_N_dom"/>
</dbReference>
<dbReference type="InterPro" id="IPR038454">
    <property type="entry name" value="DnaA_N_sf"/>
</dbReference>
<dbReference type="InterPro" id="IPR027417">
    <property type="entry name" value="P-loop_NTPase"/>
</dbReference>
<dbReference type="InterPro" id="IPR010921">
    <property type="entry name" value="Trp_repressor/repl_initiator"/>
</dbReference>
<dbReference type="NCBIfam" id="TIGR00362">
    <property type="entry name" value="DnaA"/>
    <property type="match status" value="1"/>
</dbReference>
<dbReference type="PANTHER" id="PTHR30050">
    <property type="entry name" value="CHROMOSOMAL REPLICATION INITIATOR PROTEIN DNAA"/>
    <property type="match status" value="1"/>
</dbReference>
<dbReference type="PANTHER" id="PTHR30050:SF2">
    <property type="entry name" value="CHROMOSOMAL REPLICATION INITIATOR PROTEIN DNAA"/>
    <property type="match status" value="1"/>
</dbReference>
<dbReference type="Pfam" id="PF00308">
    <property type="entry name" value="Bac_DnaA"/>
    <property type="match status" value="1"/>
</dbReference>
<dbReference type="Pfam" id="PF08299">
    <property type="entry name" value="Bac_DnaA_C"/>
    <property type="match status" value="1"/>
</dbReference>
<dbReference type="Pfam" id="PF11638">
    <property type="entry name" value="DnaA_N"/>
    <property type="match status" value="1"/>
</dbReference>
<dbReference type="PRINTS" id="PR00051">
    <property type="entry name" value="DNAA"/>
</dbReference>
<dbReference type="SMART" id="SM00382">
    <property type="entry name" value="AAA"/>
    <property type="match status" value="1"/>
</dbReference>
<dbReference type="SMART" id="SM00760">
    <property type="entry name" value="Bac_DnaA_C"/>
    <property type="match status" value="1"/>
</dbReference>
<dbReference type="SUPFAM" id="SSF52540">
    <property type="entry name" value="P-loop containing nucleoside triphosphate hydrolases"/>
    <property type="match status" value="1"/>
</dbReference>
<dbReference type="SUPFAM" id="SSF48295">
    <property type="entry name" value="TrpR-like"/>
    <property type="match status" value="1"/>
</dbReference>
<dbReference type="PROSITE" id="PS01008">
    <property type="entry name" value="DNAA"/>
    <property type="match status" value="1"/>
</dbReference>
<sequence length="482" mass="54091">MRRGKKVGGIVLIPYSAAIAVEQSLEHLWEQILERLQHQLSRPTFETWIKTATAEAFDGKVLRLSTPNPFARNWLQKYYLRTIADVAAEILGHGIELQIGVLSDTSAEPESGAELWPAISPPPAVEVVKPPTTTAGRPPLRSSDLNPKYVFSRFVVGANNRMAHAASLAIAEYPGREYNPLFLCGGVGLGKTHLMQAIGHYRLEIDPDAKIFYVSTEQFTNDLIAAIRRDSMQSFREHYRAADVIMVDDIQFIEGKEYTQEEFFYTFNSLHEAGKQIVLASDRPPSQIPRLQERLISRFSMGLIADIQPPDFETRVAILQKKSEFENMPLPRDVIEYIAARYTSNIRELEGALTRAVAYASISGLALTLANIAPVLTPPTEKMELSPEMILQTVAETFDVSIEDLRGNSRRREVSLARQVGMYLMRQHTDLSLPKIGEQFGGKDHTTVMYSCEKIGQLRQSDPQMGKQLQEINDQLFVASRG</sequence>
<feature type="chain" id="PRO_0000461891" description="Chromosomal replication initiator protein DnaA">
    <location>
        <begin position="1"/>
        <end position="482"/>
    </location>
</feature>
<feature type="region of interest" description="Domain I, interacts with DnaA modulators" evidence="1">
    <location>
        <begin position="1"/>
        <end position="96"/>
    </location>
</feature>
<feature type="region of interest" description="Domain II" evidence="1">
    <location>
        <begin position="96"/>
        <end position="143"/>
    </location>
</feature>
<feature type="region of interest" description="Domain III, AAA+ region" evidence="1">
    <location>
        <begin position="144"/>
        <end position="360"/>
    </location>
</feature>
<feature type="region of interest" description="Domain IV, binds dsDNA" evidence="1">
    <location>
        <begin position="361"/>
        <end position="482"/>
    </location>
</feature>
<feature type="binding site" evidence="1">
    <location>
        <position position="188"/>
    </location>
    <ligand>
        <name>ATP</name>
        <dbReference type="ChEBI" id="CHEBI:30616"/>
    </ligand>
</feature>
<feature type="binding site" evidence="1">
    <location>
        <position position="190"/>
    </location>
    <ligand>
        <name>ATP</name>
        <dbReference type="ChEBI" id="CHEBI:30616"/>
    </ligand>
</feature>
<feature type="binding site" evidence="1">
    <location>
        <position position="191"/>
    </location>
    <ligand>
        <name>ATP</name>
        <dbReference type="ChEBI" id="CHEBI:30616"/>
    </ligand>
</feature>
<feature type="binding site" evidence="1">
    <location>
        <position position="192"/>
    </location>
    <ligand>
        <name>ATP</name>
        <dbReference type="ChEBI" id="CHEBI:30616"/>
    </ligand>
</feature>
<feature type="mutagenesis site" description="No strand separation in vitro, wild-type ATP binding." evidence="2">
    <original>I</original>
    <variation>A</variation>
    <location>
        <position position="224"/>
    </location>
</feature>
<feature type="mutagenesis site" description="No strand separation in vitro, wild-type ATP binding." evidence="2">
    <original>R</original>
    <variation>A</variation>
    <location>
        <position position="298"/>
    </location>
</feature>
<keyword id="KW-0067">ATP-binding</keyword>
<keyword id="KW-0963">Cytoplasm</keyword>
<keyword id="KW-0235">DNA replication</keyword>
<keyword id="KW-0238">DNA-binding</keyword>
<keyword id="KW-0446">Lipid-binding</keyword>
<keyword id="KW-0547">Nucleotide-binding</keyword>
<keyword id="KW-1185">Reference proteome</keyword>
<organism>
    <name type="scientific">Synechococcus elongatus (strain ATCC 33912 / PCC 7942 / FACHB-805)</name>
    <name type="common">Anacystis nidulans R2</name>
    <dbReference type="NCBI Taxonomy" id="1140"/>
    <lineage>
        <taxon>Bacteria</taxon>
        <taxon>Bacillati</taxon>
        <taxon>Cyanobacteriota</taxon>
        <taxon>Cyanophyceae</taxon>
        <taxon>Synechococcales</taxon>
        <taxon>Synechococcaceae</taxon>
        <taxon>Synechococcus</taxon>
    </lineage>
</organism>